<dbReference type="EMBL" id="AL050051">
    <property type="protein sequence ID" value="CAB43251.1"/>
    <property type="status" value="ALT_FRAME"/>
    <property type="molecule type" value="mRNA"/>
</dbReference>
<dbReference type="EMBL" id="BC005398">
    <property type="protein sequence ID" value="AAH05398.1"/>
    <property type="molecule type" value="mRNA"/>
</dbReference>
<dbReference type="CCDS" id="CCDS3085.1"/>
<dbReference type="PIR" id="T08723">
    <property type="entry name" value="T08723"/>
</dbReference>
<dbReference type="RefSeq" id="NP_001229303.1">
    <property type="nucleotide sequence ID" value="NM_001242374.1"/>
</dbReference>
<dbReference type="RefSeq" id="NP_001229304.1">
    <property type="nucleotide sequence ID" value="NM_001242375.1"/>
</dbReference>
<dbReference type="RefSeq" id="NP_056206.1">
    <property type="nucleotide sequence ID" value="NM_015391.4"/>
</dbReference>
<dbReference type="PDB" id="4UI9">
    <property type="method" value="EM"/>
    <property type="resolution" value="3.60 A"/>
    <property type="chains" value="M=1-74"/>
</dbReference>
<dbReference type="PDB" id="5G04">
    <property type="method" value="EM"/>
    <property type="resolution" value="4.00 A"/>
    <property type="chains" value="M=1-74"/>
</dbReference>
<dbReference type="PDB" id="5KHR">
    <property type="method" value="EM"/>
    <property type="resolution" value="6.10 A"/>
    <property type="chains" value="M=1-74"/>
</dbReference>
<dbReference type="PDB" id="5KHU">
    <property type="method" value="EM"/>
    <property type="resolution" value="4.80 A"/>
    <property type="chains" value="M=1-74"/>
</dbReference>
<dbReference type="PDB" id="5L9T">
    <property type="method" value="EM"/>
    <property type="resolution" value="6.40 A"/>
    <property type="chains" value="M=1-74"/>
</dbReference>
<dbReference type="PDB" id="5L9U">
    <property type="method" value="EM"/>
    <property type="resolution" value="6.40 A"/>
    <property type="chains" value="M=1-74"/>
</dbReference>
<dbReference type="PDB" id="5LCW">
    <property type="method" value="EM"/>
    <property type="resolution" value="4.00 A"/>
    <property type="chains" value="M=1-74"/>
</dbReference>
<dbReference type="PDB" id="6Q6G">
    <property type="method" value="EM"/>
    <property type="resolution" value="3.20 A"/>
    <property type="chains" value="M=1-74"/>
</dbReference>
<dbReference type="PDB" id="6Q6H">
    <property type="method" value="EM"/>
    <property type="resolution" value="3.20 A"/>
    <property type="chains" value="M=1-74"/>
</dbReference>
<dbReference type="PDB" id="6TLJ">
    <property type="method" value="EM"/>
    <property type="resolution" value="3.80 A"/>
    <property type="chains" value="M=1-74"/>
</dbReference>
<dbReference type="PDB" id="6TM5">
    <property type="method" value="EM"/>
    <property type="resolution" value="3.90 A"/>
    <property type="chains" value="M=1-74"/>
</dbReference>
<dbReference type="PDB" id="6TNT">
    <property type="method" value="EM"/>
    <property type="resolution" value="3.78 A"/>
    <property type="chains" value="M=1-74"/>
</dbReference>
<dbReference type="PDB" id="8PKP">
    <property type="method" value="EM"/>
    <property type="resolution" value="3.20 A"/>
    <property type="chains" value="M=1-74"/>
</dbReference>
<dbReference type="PDB" id="8TAR">
    <property type="method" value="EM"/>
    <property type="resolution" value="4.00 A"/>
    <property type="chains" value="M=1-74"/>
</dbReference>
<dbReference type="PDB" id="8TAU">
    <property type="method" value="EM"/>
    <property type="resolution" value="3.50 A"/>
    <property type="chains" value="M=1-74"/>
</dbReference>
<dbReference type="PDB" id="9GAW">
    <property type="method" value="EM"/>
    <property type="resolution" value="2.90 A"/>
    <property type="chains" value="M=1-74"/>
</dbReference>
<dbReference type="PDBsum" id="4UI9"/>
<dbReference type="PDBsum" id="5G04"/>
<dbReference type="PDBsum" id="5KHR"/>
<dbReference type="PDBsum" id="5KHU"/>
<dbReference type="PDBsum" id="5L9T"/>
<dbReference type="PDBsum" id="5L9U"/>
<dbReference type="PDBsum" id="5LCW"/>
<dbReference type="PDBsum" id="6Q6G"/>
<dbReference type="PDBsum" id="6Q6H"/>
<dbReference type="PDBsum" id="6TLJ"/>
<dbReference type="PDBsum" id="6TM5"/>
<dbReference type="PDBsum" id="6TNT"/>
<dbReference type="PDBsum" id="8PKP"/>
<dbReference type="PDBsum" id="8TAR"/>
<dbReference type="PDBsum" id="8TAU"/>
<dbReference type="PDBsum" id="9GAW"/>
<dbReference type="EMDB" id="EMD-10516"/>
<dbReference type="EMDB" id="EMD-10518"/>
<dbReference type="EMDB" id="EMD-10536"/>
<dbReference type="EMDB" id="EMD-13931"/>
<dbReference type="EMDB" id="EMD-17751"/>
<dbReference type="EMDB" id="EMD-19711"/>
<dbReference type="EMDB" id="EMD-2924"/>
<dbReference type="EMDB" id="EMD-3385"/>
<dbReference type="EMDB" id="EMD-3386"/>
<dbReference type="EMDB" id="EMD-3387"/>
<dbReference type="EMDB" id="EMD-3388"/>
<dbReference type="EMDB" id="EMD-3389"/>
<dbReference type="EMDB" id="EMD-3390"/>
<dbReference type="EMDB" id="EMD-4037"/>
<dbReference type="EMDB" id="EMD-41140"/>
<dbReference type="EMDB" id="EMD-41142"/>
<dbReference type="EMDB" id="EMD-4465"/>
<dbReference type="EMDB" id="EMD-4466"/>
<dbReference type="EMDB" id="EMD-4467"/>
<dbReference type="EMDB" id="EMD-51190"/>
<dbReference type="SMR" id="Q9BS18"/>
<dbReference type="BioGRID" id="117372">
    <property type="interactions" value="83"/>
</dbReference>
<dbReference type="ComplexPortal" id="CPX-1860">
    <property type="entry name" value="Anaphase-promoting core complex"/>
</dbReference>
<dbReference type="DIP" id="DIP-56455N"/>
<dbReference type="FunCoup" id="Q9BS18">
    <property type="interactions" value="461"/>
</dbReference>
<dbReference type="IntAct" id="Q9BS18">
    <property type="interactions" value="26"/>
</dbReference>
<dbReference type="STRING" id="9606.ENSP00000421842"/>
<dbReference type="iPTMnet" id="Q9BS18"/>
<dbReference type="PhosphoSitePlus" id="Q9BS18"/>
<dbReference type="BioMuta" id="ANAPC13"/>
<dbReference type="DMDM" id="74732956"/>
<dbReference type="jPOST" id="Q9BS18"/>
<dbReference type="MassIVE" id="Q9BS18"/>
<dbReference type="PaxDb" id="9606-ENSP00000421842"/>
<dbReference type="PeptideAtlas" id="Q9BS18"/>
<dbReference type="ProteomicsDB" id="78858"/>
<dbReference type="Pumba" id="Q9BS18"/>
<dbReference type="Antibodypedia" id="49243">
    <property type="antibodies" value="77 antibodies from 25 providers"/>
</dbReference>
<dbReference type="DNASU" id="25847"/>
<dbReference type="Ensembl" id="ENST00000354910.10">
    <property type="protein sequence ID" value="ENSP00000346987.5"/>
    <property type="gene ID" value="ENSG00000129055.13"/>
</dbReference>
<dbReference type="Ensembl" id="ENST00000510994.5">
    <property type="protein sequence ID" value="ENSP00000421842.1"/>
    <property type="gene ID" value="ENSG00000129055.13"/>
</dbReference>
<dbReference type="Ensembl" id="ENST00000511751.1">
    <property type="protein sequence ID" value="ENSP00000421760.1"/>
    <property type="gene ID" value="ENSG00000129055.13"/>
</dbReference>
<dbReference type="Ensembl" id="ENST00000514612.5">
    <property type="protein sequence ID" value="ENSP00000427327.1"/>
    <property type="gene ID" value="ENSG00000129055.13"/>
</dbReference>
<dbReference type="GeneID" id="25847"/>
<dbReference type="KEGG" id="hsa:25847"/>
<dbReference type="MANE-Select" id="ENST00000354910.10">
    <property type="protein sequence ID" value="ENSP00000346987.5"/>
    <property type="RefSeq nucleotide sequence ID" value="NM_015391.4"/>
    <property type="RefSeq protein sequence ID" value="NP_056206.1"/>
</dbReference>
<dbReference type="UCSC" id="uc003eqi.4">
    <property type="organism name" value="human"/>
</dbReference>
<dbReference type="AGR" id="HGNC:24540"/>
<dbReference type="CTD" id="25847"/>
<dbReference type="DisGeNET" id="25847"/>
<dbReference type="GeneCards" id="ANAPC13"/>
<dbReference type="HGNC" id="HGNC:24540">
    <property type="gene designation" value="ANAPC13"/>
</dbReference>
<dbReference type="HPA" id="ENSG00000129055">
    <property type="expression patterns" value="Low tissue specificity"/>
</dbReference>
<dbReference type="MIM" id="614484">
    <property type="type" value="gene"/>
</dbReference>
<dbReference type="neXtProt" id="NX_Q9BS18"/>
<dbReference type="OpenTargets" id="ENSG00000129055"/>
<dbReference type="PharmGKB" id="PA134949652"/>
<dbReference type="VEuPathDB" id="HostDB:ENSG00000129055"/>
<dbReference type="eggNOG" id="ENOG502S4J1">
    <property type="taxonomic scope" value="Eukaryota"/>
</dbReference>
<dbReference type="GeneTree" id="ENSGT00390000008673"/>
<dbReference type="HOGENOM" id="CLU_199969_0_0_1"/>
<dbReference type="InParanoid" id="Q9BS18"/>
<dbReference type="OMA" id="PHDDIAV"/>
<dbReference type="OrthoDB" id="25675at2759"/>
<dbReference type="PAN-GO" id="Q9BS18">
    <property type="GO annotations" value="2 GO annotations based on evolutionary models"/>
</dbReference>
<dbReference type="PhylomeDB" id="Q9BS18"/>
<dbReference type="TreeFam" id="TF105448"/>
<dbReference type="PathwayCommons" id="Q9BS18"/>
<dbReference type="Reactome" id="R-HSA-983168">
    <property type="pathway name" value="Antigen processing: Ubiquitination &amp; Proteasome degradation"/>
</dbReference>
<dbReference type="SignaLink" id="Q9BS18"/>
<dbReference type="SIGNOR" id="Q9BS18"/>
<dbReference type="UniPathway" id="UPA00143"/>
<dbReference type="BioGRID-ORCS" id="25847">
    <property type="hits" value="353 hits in 1156 CRISPR screens"/>
</dbReference>
<dbReference type="ChiTaRS" id="ANAPC13">
    <property type="organism name" value="human"/>
</dbReference>
<dbReference type="EvolutionaryTrace" id="Q9BS18"/>
<dbReference type="GenomeRNAi" id="25847"/>
<dbReference type="Pharos" id="Q9BS18">
    <property type="development level" value="Tbio"/>
</dbReference>
<dbReference type="PRO" id="PR:Q9BS18"/>
<dbReference type="Proteomes" id="UP000005640">
    <property type="component" value="Chromosome 3"/>
</dbReference>
<dbReference type="RNAct" id="Q9BS18">
    <property type="molecule type" value="protein"/>
</dbReference>
<dbReference type="Bgee" id="ENSG00000129055">
    <property type="expression patterns" value="Expressed in nephron tubule and 217 other cell types or tissues"/>
</dbReference>
<dbReference type="ExpressionAtlas" id="Q9BS18">
    <property type="expression patterns" value="baseline and differential"/>
</dbReference>
<dbReference type="GO" id="GO:0005680">
    <property type="term" value="C:anaphase-promoting complex"/>
    <property type="evidence" value="ECO:0000314"/>
    <property type="project" value="UniProtKB"/>
</dbReference>
<dbReference type="GO" id="GO:0031145">
    <property type="term" value="P:anaphase-promoting complex-dependent catabolic process"/>
    <property type="evidence" value="ECO:0000314"/>
    <property type="project" value="UniProtKB"/>
</dbReference>
<dbReference type="GO" id="GO:0051301">
    <property type="term" value="P:cell division"/>
    <property type="evidence" value="ECO:0007669"/>
    <property type="project" value="UniProtKB-KW"/>
</dbReference>
<dbReference type="GO" id="GO:0141198">
    <property type="term" value="P:protein branched polyubiquitination"/>
    <property type="evidence" value="ECO:0000314"/>
    <property type="project" value="UniProtKB"/>
</dbReference>
<dbReference type="GO" id="GO:0070979">
    <property type="term" value="P:protein K11-linked ubiquitination"/>
    <property type="evidence" value="ECO:0000314"/>
    <property type="project" value="UniProtKB"/>
</dbReference>
<dbReference type="GO" id="GO:0070936">
    <property type="term" value="P:protein K48-linked ubiquitination"/>
    <property type="evidence" value="ECO:0000314"/>
    <property type="project" value="UniProtKB"/>
</dbReference>
<dbReference type="GO" id="GO:0051445">
    <property type="term" value="P:regulation of meiotic cell cycle"/>
    <property type="evidence" value="ECO:0000303"/>
    <property type="project" value="ComplexPortal"/>
</dbReference>
<dbReference type="GO" id="GO:0007346">
    <property type="term" value="P:regulation of mitotic cell cycle"/>
    <property type="evidence" value="ECO:0000303"/>
    <property type="project" value="ComplexPortal"/>
</dbReference>
<dbReference type="InterPro" id="IPR008401">
    <property type="entry name" value="Apc13"/>
</dbReference>
<dbReference type="PANTHER" id="PTHR28672">
    <property type="entry name" value="ANAPHASE-PROMOTING COMPLEX SUBUNIT 13"/>
    <property type="match status" value="1"/>
</dbReference>
<dbReference type="PANTHER" id="PTHR28672:SF1">
    <property type="entry name" value="ANAPHASE-PROMOTING COMPLEX SUBUNIT 13"/>
    <property type="match status" value="1"/>
</dbReference>
<dbReference type="Pfam" id="PF05839">
    <property type="entry name" value="Apc13p"/>
    <property type="match status" value="1"/>
</dbReference>
<protein>
    <recommendedName>
        <fullName>Anaphase-promoting complex subunit 13</fullName>
        <shortName>APC13</shortName>
    </recommendedName>
    <alternativeName>
        <fullName>Cyclosome subunit 13</fullName>
    </alternativeName>
</protein>
<accession>Q9BS18</accession>
<accession>Q9Y3V0</accession>
<name>APC13_HUMAN</name>
<keyword id="KW-0002">3D-structure</keyword>
<keyword id="KW-0131">Cell cycle</keyword>
<keyword id="KW-0132">Cell division</keyword>
<keyword id="KW-0498">Mitosis</keyword>
<keyword id="KW-0539">Nucleus</keyword>
<keyword id="KW-1267">Proteomics identification</keyword>
<keyword id="KW-1185">Reference proteome</keyword>
<keyword id="KW-0833">Ubl conjugation pathway</keyword>
<comment type="function">
    <text evidence="2 4 7">Component of the anaphase promoting complex/cyclosome (APC/C), a cell cycle-regulated E3 ubiquitin ligase that controls progression through mitosis and the G1 phase of the cell cycle (PubMed:15060174, PubMed:18485873). The APC/C complex acts by mediating ubiquitination and subsequent degradation of target proteins: it mainly mediates the formation of 'Lys-11'-linked polyubiquitin chains and, to a lower extent, the formation of 'Lys-48'- and 'Lys-63'-linked polyubiquitin chains (PubMed:15060174, PubMed:18485873). The APC/C complex catalyzes assembly of branched 'Lys-11'-/'Lys-48'-linked branched ubiquitin chains on target proteins (PubMed:29033132).</text>
</comment>
<comment type="pathway">
    <text evidence="2 4 7">Protein modification; protein ubiquitination.</text>
</comment>
<comment type="subunit">
    <text evidence="3 5 6">The mammalian APC/C is composed at least of 14 distinct subunits ANAPC1, ANAPC2, CDC27/APC3, ANAPC4, ANAPC5, CDC16/APC6, ANAPC7, CDC23/APC8, ANAPC10, ANAPC11, CDC26/APC12, ANAPC13, ANAPC15 and ANAPC16 that assemble into a complex of at least 19 chains with a combined molecular mass of around 1.2 MDa; APC/C interacts with FZR1 and FBXO5.</text>
</comment>
<comment type="interaction">
    <interactant intactId="EBI-2555953">
        <id>Q9BS18</id>
    </interactant>
    <interactant intactId="EBI-396137">
        <id>Q9UJX2</id>
        <label>CDC23</label>
    </interactant>
    <organismsDiffer>false</organismsDiffer>
    <experiments>10</experiments>
</comment>
<comment type="interaction">
    <interactant intactId="EBI-2555953">
        <id>Q9BS18</id>
    </interactant>
    <interactant intactId="EBI-720609">
        <id>O76024</id>
        <label>WFS1</label>
    </interactant>
    <organismsDiffer>false</organismsDiffer>
    <experiments>3</experiments>
</comment>
<comment type="subcellular location">
    <subcellularLocation>
        <location evidence="8">Nucleus</location>
    </subcellularLocation>
</comment>
<comment type="similarity">
    <text evidence="8">Belongs to the APC13 family.</text>
</comment>
<comment type="sequence caution" evidence="8">
    <conflict type="erroneous translation">
        <sequence resource="EMBL-CDS" id="CAB43251"/>
    </conflict>
    <text>Wrong choice of frame.</text>
</comment>
<sequence length="74" mass="8521">MDSEVQRDGRILDLIDDAWREDKLPYEDVAIPLNELPEPEQDNGGTTESVKEQEMKWTDLALQYLHENVPPIGN</sequence>
<evidence type="ECO:0000256" key="1">
    <source>
        <dbReference type="SAM" id="MobiDB-lite"/>
    </source>
</evidence>
<evidence type="ECO:0000269" key="2">
    <source>
    </source>
</evidence>
<evidence type="ECO:0000269" key="3">
    <source>
    </source>
</evidence>
<evidence type="ECO:0000269" key="4">
    <source>
    </source>
</evidence>
<evidence type="ECO:0000269" key="5">
    <source>
    </source>
</evidence>
<evidence type="ECO:0000269" key="6">
    <source>
    </source>
</evidence>
<evidence type="ECO:0000269" key="7">
    <source>
    </source>
</evidence>
<evidence type="ECO:0000305" key="8"/>
<evidence type="ECO:0007744" key="9">
    <source>
        <dbReference type="PDB" id="4UI9"/>
    </source>
</evidence>
<evidence type="ECO:0007829" key="10">
    <source>
        <dbReference type="PDB" id="9GAW"/>
    </source>
</evidence>
<gene>
    <name type="primary">ANAPC13</name>
</gene>
<proteinExistence type="evidence at protein level"/>
<feature type="chain" id="PRO_0000253980" description="Anaphase-promoting complex subunit 13">
    <location>
        <begin position="1"/>
        <end position="74"/>
    </location>
</feature>
<feature type="region of interest" description="Disordered" evidence="1">
    <location>
        <begin position="33"/>
        <end position="53"/>
    </location>
</feature>
<feature type="sequence conflict" description="In Ref. 1; CAB43251." evidence="8" ref="1">
    <original>D</original>
    <variation>G</variation>
    <location>
        <position position="8"/>
    </location>
</feature>
<feature type="sequence conflict" description="In Ref. 1; CAB43251." evidence="8" ref="1">
    <original>E</original>
    <variation>G</variation>
    <location>
        <position position="67"/>
    </location>
</feature>
<feature type="helix" evidence="10">
    <location>
        <begin position="9"/>
        <end position="14"/>
    </location>
</feature>
<feature type="helix" evidence="10">
    <location>
        <begin position="17"/>
        <end position="20"/>
    </location>
</feature>
<feature type="strand" evidence="10">
    <location>
        <begin position="33"/>
        <end position="37"/>
    </location>
</feature>
<feature type="helix" evidence="10">
    <location>
        <begin position="50"/>
        <end position="54"/>
    </location>
</feature>
<feature type="helix" evidence="10">
    <location>
        <begin position="62"/>
        <end position="64"/>
    </location>
</feature>
<organism>
    <name type="scientific">Homo sapiens</name>
    <name type="common">Human</name>
    <dbReference type="NCBI Taxonomy" id="9606"/>
    <lineage>
        <taxon>Eukaryota</taxon>
        <taxon>Metazoa</taxon>
        <taxon>Chordata</taxon>
        <taxon>Craniata</taxon>
        <taxon>Vertebrata</taxon>
        <taxon>Euteleostomi</taxon>
        <taxon>Mammalia</taxon>
        <taxon>Eutheria</taxon>
        <taxon>Euarchontoglires</taxon>
        <taxon>Primates</taxon>
        <taxon>Haplorrhini</taxon>
        <taxon>Catarrhini</taxon>
        <taxon>Hominidae</taxon>
        <taxon>Homo</taxon>
    </lineage>
</organism>
<reference key="1">
    <citation type="journal article" date="2007" name="BMC Genomics">
        <title>The full-ORF clone resource of the German cDNA consortium.</title>
        <authorList>
            <person name="Bechtel S."/>
            <person name="Rosenfelder H."/>
            <person name="Duda A."/>
            <person name="Schmidt C.P."/>
            <person name="Ernst U."/>
            <person name="Wellenreuther R."/>
            <person name="Mehrle A."/>
            <person name="Schuster C."/>
            <person name="Bahr A."/>
            <person name="Bloecker H."/>
            <person name="Heubner D."/>
            <person name="Hoerlein A."/>
            <person name="Michel G."/>
            <person name="Wedler H."/>
            <person name="Koehrer K."/>
            <person name="Ottenwaelder B."/>
            <person name="Poustka A."/>
            <person name="Wiemann S."/>
            <person name="Schupp I."/>
        </authorList>
    </citation>
    <scope>NUCLEOTIDE SEQUENCE [LARGE SCALE MRNA]</scope>
    <source>
        <tissue>Kidney</tissue>
    </source>
</reference>
<reference key="2">
    <citation type="journal article" date="2004" name="Genome Res.">
        <title>The status, quality, and expansion of the NIH full-length cDNA project: the Mammalian Gene Collection (MGC).</title>
        <authorList>
            <consortium name="The MGC Project Team"/>
        </authorList>
    </citation>
    <scope>NUCLEOTIDE SEQUENCE [LARGE SCALE MRNA]</scope>
    <source>
        <tissue>Kidney</tissue>
    </source>
</reference>
<reference key="3">
    <citation type="journal article" date="2004" name="Mol. Cell. Biol.">
        <title>Swm1/Apc13 is an evolutionarily conserved subunit of the anaphase-promoting complex stabilizing the association of Cdc16 and Cdc27.</title>
        <authorList>
            <person name="Schwickart M."/>
            <person name="Havlis J."/>
            <person name="Habermann B."/>
            <person name="Bogdanova A."/>
            <person name="Camasses A."/>
            <person name="Oelschlaegel T."/>
            <person name="Shevchenko A."/>
            <person name="Zachariae W."/>
        </authorList>
    </citation>
    <scope>FUNCTION</scope>
</reference>
<reference key="4">
    <citation type="journal article" date="2005" name="Mol. Cell">
        <title>Localization of the coactivator Cdh1 and the cullin subunit Apc2 in a cryo-electron microscopy model of vertebrate APC/C.</title>
        <authorList>
            <person name="Dube P."/>
            <person name="Herzog F."/>
            <person name="Gieffers C."/>
            <person name="Sander B."/>
            <person name="Riedel D."/>
            <person name="Mueller S.A."/>
            <person name="Engel A."/>
            <person name="Peters J.-M."/>
            <person name="Stark H."/>
        </authorList>
    </citation>
    <scope>IDENTIFICATION IN THE APC/C COMPLEX</scope>
</reference>
<reference key="5">
    <citation type="journal article" date="2008" name="Cell">
        <title>Mechanism of ubiquitin-chain formation by the human anaphase-promoting complex.</title>
        <authorList>
            <person name="Jin L."/>
            <person name="Williamson A."/>
            <person name="Banerjee S."/>
            <person name="Philipp I."/>
            <person name="Rape M."/>
        </authorList>
    </citation>
    <scope>FUNCTION OF THE APC/C</scope>
</reference>
<reference key="6">
    <citation type="journal article" date="2017" name="Cell">
        <title>Assembly and function of heterotypic ubiquitin chains in cell-cycle and protein quality control.</title>
        <authorList>
            <person name="Yau R.G."/>
            <person name="Doerner K."/>
            <person name="Castellanos E.R."/>
            <person name="Haakonsen D.L."/>
            <person name="Werner A."/>
            <person name="Wang N."/>
            <person name="Yang X.W."/>
            <person name="Martinez-Martin N."/>
            <person name="Matsumoto M.L."/>
            <person name="Dixit V.M."/>
            <person name="Rape M."/>
        </authorList>
    </citation>
    <scope>FUNCTION</scope>
    <scope>PATHWAY</scope>
</reference>
<reference key="7">
    <citation type="journal article" date="2014" name="Nature">
        <title>Molecular architecture and mechanism of the anaphase-promoting complex.</title>
        <authorList>
            <person name="Chang L."/>
            <person name="Zhang Z."/>
            <person name="Yang J."/>
            <person name="McLaughlin S.H."/>
            <person name="Barford D."/>
        </authorList>
    </citation>
    <scope>STRUCTURE BY ELECTRON MICROSCOPY (7.4 ANGSTROMS) OF THE APC/C</scope>
    <scope>SUBUNIT</scope>
</reference>
<reference evidence="9" key="8">
    <citation type="journal article" date="2015" name="Nature">
        <title>Atomic structure of the APC/C and its mechanism of protein ubiquitination.</title>
        <authorList>
            <person name="Chang L."/>
            <person name="Zhang Z."/>
            <person name="Yang J."/>
            <person name="McLaughlin S.H."/>
            <person name="Barford D."/>
        </authorList>
    </citation>
    <scope>STRUCTURE BY ELECTRON MICROSCOPY (3.60 ANGSTROMS) OF APC/C</scope>
    <scope>SUBUNIT</scope>
</reference>